<organismHost>
    <name type="scientific">Ornithodoros</name>
    <name type="common">relapsing fever ticks</name>
    <dbReference type="NCBI Taxonomy" id="6937"/>
</organismHost>
<organismHost>
    <name type="scientific">Phacochoerus aethiopicus</name>
    <name type="common">Warthog</name>
    <dbReference type="NCBI Taxonomy" id="85517"/>
</organismHost>
<organismHost>
    <name type="scientific">Phacochoerus africanus</name>
    <name type="common">Warthog</name>
    <dbReference type="NCBI Taxonomy" id="41426"/>
</organismHost>
<organismHost>
    <name type="scientific">Potamochoerus larvatus</name>
    <name type="common">Bushpig</name>
    <dbReference type="NCBI Taxonomy" id="273792"/>
</organismHost>
<organismHost>
    <name type="scientific">Sus scrofa</name>
    <name type="common">Pig</name>
    <dbReference type="NCBI Taxonomy" id="9823"/>
</organismHost>
<accession>P0C9L9</accession>
<gene>
    <name type="ordered locus">Ken-001</name>
</gene>
<dbReference type="EMBL" id="AY261360">
    <property type="status" value="NOT_ANNOTATED_CDS"/>
    <property type="molecule type" value="Genomic_DNA"/>
</dbReference>
<dbReference type="SMR" id="P0C9L9"/>
<dbReference type="Proteomes" id="UP000000861">
    <property type="component" value="Segment"/>
</dbReference>
<dbReference type="GO" id="GO:0042330">
    <property type="term" value="P:taxis"/>
    <property type="evidence" value="ECO:0007669"/>
    <property type="project" value="InterPro"/>
</dbReference>
<dbReference type="InterPro" id="IPR002595">
    <property type="entry name" value="ASFV_MGF360"/>
</dbReference>
<dbReference type="Pfam" id="PF01671">
    <property type="entry name" value="ASFV_360"/>
    <property type="match status" value="1"/>
</dbReference>
<feature type="chain" id="PRO_0000373245" description="Protein MGF 360-1L">
    <location>
        <begin position="1"/>
        <end position="364"/>
    </location>
</feature>
<evidence type="ECO:0000250" key="1"/>
<evidence type="ECO:0000305" key="2"/>
<proteinExistence type="inferred from homology"/>
<reference key="1">
    <citation type="submission" date="2003-03" db="EMBL/GenBank/DDBJ databases">
        <title>African swine fever virus genomes.</title>
        <authorList>
            <person name="Kutish G.F."/>
            <person name="Rock D.L."/>
        </authorList>
    </citation>
    <scope>NUCLEOTIDE SEQUENCE [LARGE SCALE GENOMIC DNA]</scope>
</reference>
<comment type="function">
    <text evidence="1">Plays a role in virus cell tropism, and may be required for efficient virus replication in macrophages.</text>
</comment>
<comment type="similarity">
    <text evidence="2">Belongs to the asfivirus MGF 360 family.</text>
</comment>
<name>3601L_ASFK5</name>
<organism>
    <name type="scientific">African swine fever virus (isolate Pig/Kenya/KEN-50/1950)</name>
    <name type="common">ASFV</name>
    <dbReference type="NCBI Taxonomy" id="561445"/>
    <lineage>
        <taxon>Viruses</taxon>
        <taxon>Varidnaviria</taxon>
        <taxon>Bamfordvirae</taxon>
        <taxon>Nucleocytoviricota</taxon>
        <taxon>Pokkesviricetes</taxon>
        <taxon>Asfuvirales</taxon>
        <taxon>Asfarviridae</taxon>
        <taxon>Asfivirus</taxon>
        <taxon>African swine fever virus</taxon>
    </lineage>
</organism>
<protein>
    <recommendedName>
        <fullName>Protein MGF 360-1L</fullName>
    </recommendedName>
</protein>
<sequence>MSTPSSLQALTKKVLATQHISKEYSQSREYCHILKCCGLWWHGGPIMLSTNEDNQMMIKSASFKDGLELNVALMKAVQENNRGLIELFIEWGADINFGLITVNTENIRSLCRELGAKESLNKWEVLDVFYTVKRFKSSNNIILCHELLSNNPLFLSEDNVQLRRIINYNLRRISINFILDEISFNEKLTRFWYSQAVLYNLTEAIQYFYQKYKHFKDWRLICGLAYNNVFDLHELYNKEKVGMDINQMMELACIYRYNYSTIYYCFMMGADINQAMITSVIKSYICNLFFCIDLGATAFEECLEIAKQQNDIESIKILIYKNYYSPDSSLISLKITDPEKINILLDDETYESKNELIYEESHRY</sequence>